<accession>P46764</accession>
<geneLocation type="mitochondrion"/>
<organism>
    <name type="scientific">Acanthamoeba castellanii</name>
    <name type="common">Amoeba</name>
    <dbReference type="NCBI Taxonomy" id="5755"/>
    <lineage>
        <taxon>Eukaryota</taxon>
        <taxon>Amoebozoa</taxon>
        <taxon>Discosea</taxon>
        <taxon>Longamoebia</taxon>
        <taxon>Centramoebida</taxon>
        <taxon>Acanthamoebidae</taxon>
        <taxon>Acanthamoeba</taxon>
    </lineage>
</organism>
<reference key="1">
    <citation type="journal article" date="1995" name="J. Mol. Biol.">
        <title>The mitochondrial DNA of the amoeboid protozoon, Acanthamoeba castellanii: complete sequence, gene content and genome organization.</title>
        <authorList>
            <person name="Burger G."/>
            <person name="Plante I."/>
            <person name="Lonergan K.M."/>
            <person name="Gray M.W."/>
        </authorList>
    </citation>
    <scope>NUCLEOTIDE SEQUENCE [GENOMIC DNA]</scope>
    <source>
        <strain>ATCC 30010 / Neff</strain>
    </source>
</reference>
<gene>
    <name type="primary">RPL5</name>
</gene>
<sequence length="177" mass="21764">MRFYNRYNSSLKNYLLCSINSFNTNTLKIPLKPTLSAVFNTFRGERSLKFIKLYLMILYISNQKPFIKKVKFSYIKKKILKRFFISVSLNKKNSFNFFMYMLNFYNYFFHIYYQKCLKYNRFENSLILYIDNIQFFFKNYNKQNQKTQIKCQLNLRNSQASILFKYLNNMFLIKVKN</sequence>
<name>RM05_ACACA</name>
<keyword id="KW-0496">Mitochondrion</keyword>
<keyword id="KW-0687">Ribonucleoprotein</keyword>
<keyword id="KW-0689">Ribosomal protein</keyword>
<evidence type="ECO:0000305" key="1"/>
<proteinExistence type="inferred from homology"/>
<comment type="subcellular location">
    <subcellularLocation>
        <location>Mitochondrion</location>
    </subcellularLocation>
</comment>
<comment type="similarity">
    <text evidence="1">Belongs to the universal ribosomal protein uL5 family.</text>
</comment>
<protein>
    <recommendedName>
        <fullName evidence="1">Large ribosomal subunit protein uL5m</fullName>
    </recommendedName>
    <alternativeName>
        <fullName>60S ribosomal protein L5, mitochondrial</fullName>
    </alternativeName>
</protein>
<feature type="chain" id="PRO_0000125079" description="Large ribosomal subunit protein uL5m">
    <location>
        <begin position="1"/>
        <end position="177"/>
    </location>
</feature>
<dbReference type="EMBL" id="U12386">
    <property type="protein sequence ID" value="AAD11844.1"/>
    <property type="molecule type" value="Genomic_DNA"/>
</dbReference>
<dbReference type="PIR" id="S53852">
    <property type="entry name" value="S53852"/>
</dbReference>
<dbReference type="RefSeq" id="NP_042551.1">
    <property type="nucleotide sequence ID" value="NC_001637.1"/>
</dbReference>
<dbReference type="GeneID" id="1734048"/>
<dbReference type="GO" id="GO:0005739">
    <property type="term" value="C:mitochondrion"/>
    <property type="evidence" value="ECO:0007669"/>
    <property type="project" value="UniProtKB-SubCell"/>
</dbReference>
<dbReference type="GO" id="GO:1990904">
    <property type="term" value="C:ribonucleoprotein complex"/>
    <property type="evidence" value="ECO:0007669"/>
    <property type="project" value="UniProtKB-KW"/>
</dbReference>
<dbReference type="GO" id="GO:0005840">
    <property type="term" value="C:ribosome"/>
    <property type="evidence" value="ECO:0007669"/>
    <property type="project" value="UniProtKB-KW"/>
</dbReference>